<protein>
    <recommendedName>
        <fullName>NEDD4 family-interacting protein 1</fullName>
    </recommendedName>
</protein>
<accession>Q4V786</accession>
<evidence type="ECO:0000250" key="1"/>
<evidence type="ECO:0000255" key="2"/>
<evidence type="ECO:0000256" key="3">
    <source>
        <dbReference type="SAM" id="MobiDB-lite"/>
    </source>
</evidence>
<gene>
    <name type="primary">ndfip1</name>
</gene>
<dbReference type="EMBL" id="BC098082">
    <property type="protein sequence ID" value="AAH98082.1"/>
    <property type="molecule type" value="mRNA"/>
</dbReference>
<dbReference type="RefSeq" id="NP_001027505.1">
    <property type="nucleotide sequence ID" value="NM_001032334.1"/>
</dbReference>
<dbReference type="FunCoup" id="Q4V786">
    <property type="interactions" value="1650"/>
</dbReference>
<dbReference type="STRING" id="8364.ENSXETP00000003388"/>
<dbReference type="PaxDb" id="8364-ENSXETP00000042319"/>
<dbReference type="DNASU" id="613097"/>
<dbReference type="GeneID" id="613097"/>
<dbReference type="KEGG" id="xtr:613097"/>
<dbReference type="AGR" id="Xenbase:XB-GENE-961957"/>
<dbReference type="CTD" id="80762"/>
<dbReference type="Xenbase" id="XB-GENE-961957">
    <property type="gene designation" value="ndfip1"/>
</dbReference>
<dbReference type="eggNOG" id="KOG4812">
    <property type="taxonomic scope" value="Eukaryota"/>
</dbReference>
<dbReference type="HOGENOM" id="CLU_074980_2_0_1"/>
<dbReference type="InParanoid" id="Q4V786"/>
<dbReference type="OrthoDB" id="10003116at2759"/>
<dbReference type="Proteomes" id="UP000008143">
    <property type="component" value="Chromosome 3"/>
</dbReference>
<dbReference type="Bgee" id="ENSXETG00000019569">
    <property type="expression patterns" value="Expressed in brain and 19 other cell types or tissues"/>
</dbReference>
<dbReference type="ExpressionAtlas" id="Q4V786">
    <property type="expression patterns" value="differential"/>
</dbReference>
<dbReference type="GO" id="GO:0000139">
    <property type="term" value="C:Golgi membrane"/>
    <property type="evidence" value="ECO:0007669"/>
    <property type="project" value="UniProtKB-SubCell"/>
</dbReference>
<dbReference type="GO" id="GO:0030001">
    <property type="term" value="P:metal ion transport"/>
    <property type="evidence" value="ECO:0007669"/>
    <property type="project" value="InterPro"/>
</dbReference>
<dbReference type="GO" id="GO:0007034">
    <property type="term" value="P:vacuolar transport"/>
    <property type="evidence" value="ECO:0007669"/>
    <property type="project" value="InterPro"/>
</dbReference>
<dbReference type="CDD" id="cd22305">
    <property type="entry name" value="NDFIP1"/>
    <property type="match status" value="1"/>
</dbReference>
<dbReference type="InterPro" id="IPR019325">
    <property type="entry name" value="NEDD4/Bsd2"/>
</dbReference>
<dbReference type="PANTHER" id="PTHR13396">
    <property type="entry name" value="NEDD4 FAMILY INTERACTING PROTEIN 1/2"/>
    <property type="match status" value="1"/>
</dbReference>
<dbReference type="PANTHER" id="PTHR13396:SF3">
    <property type="entry name" value="NEDD4 FAMILY-INTERACTING PROTEIN 1"/>
    <property type="match status" value="1"/>
</dbReference>
<dbReference type="Pfam" id="PF10176">
    <property type="entry name" value="NEDD4_Bsd2"/>
    <property type="match status" value="2"/>
</dbReference>
<organism>
    <name type="scientific">Xenopus tropicalis</name>
    <name type="common">Western clawed frog</name>
    <name type="synonym">Silurana tropicalis</name>
    <dbReference type="NCBI Taxonomy" id="8364"/>
    <lineage>
        <taxon>Eukaryota</taxon>
        <taxon>Metazoa</taxon>
        <taxon>Chordata</taxon>
        <taxon>Craniata</taxon>
        <taxon>Vertebrata</taxon>
        <taxon>Euteleostomi</taxon>
        <taxon>Amphibia</taxon>
        <taxon>Batrachia</taxon>
        <taxon>Anura</taxon>
        <taxon>Pipoidea</taxon>
        <taxon>Pipidae</taxon>
        <taxon>Xenopodinae</taxon>
        <taxon>Xenopus</taxon>
        <taxon>Silurana</taxon>
    </lineage>
</organism>
<name>NFIP1_XENTR</name>
<proteinExistence type="evidence at transcript level"/>
<comment type="function">
    <text evidence="1">May play a role in Golgi structure maintenance.</text>
</comment>
<comment type="subcellular location">
    <subcellularLocation>
        <location evidence="1">Golgi apparatus membrane</location>
        <topology evidence="1">Multi-pass membrane protein</topology>
    </subcellularLocation>
</comment>
<reference key="1">
    <citation type="submission" date="2005-06" db="EMBL/GenBank/DDBJ databases">
        <authorList>
            <consortium name="NIH - Xenopus Gene Collection (XGC) project"/>
        </authorList>
    </citation>
    <scope>NUCLEOTIDE SEQUENCE [LARGE SCALE MRNA]</scope>
</reference>
<sequence>MSEQSSSRYQQLQNEEEPGENPQASTDAPPPYSSIAGESSGLFDYKDELGFPKPPSYNVATSLPSYDEAERTKAEATIPLVPGRDDDFVARDDFDDADQLRIGNDGIFMLTFFMAFLFNWIGFFLSFCLTSSAAGRYGAISGFGLSLIKWILIVRFSTYFPGYFDGQYWLWWVFLVLGFLLFLRGFINYAKVRKMPDNFSTLPRTRVLFIY</sequence>
<feature type="chain" id="PRO_0000076274" description="NEDD4 family-interacting protein 1">
    <location>
        <begin position="1"/>
        <end position="211"/>
    </location>
</feature>
<feature type="topological domain" description="Cytoplasmic" evidence="2">
    <location>
        <begin position="1"/>
        <end position="106"/>
    </location>
</feature>
<feature type="transmembrane region" description="Helical" evidence="2">
    <location>
        <begin position="107"/>
        <end position="127"/>
    </location>
</feature>
<feature type="topological domain" description="Extracellular" evidence="2">
    <location>
        <begin position="128"/>
        <end position="133"/>
    </location>
</feature>
<feature type="transmembrane region" description="Helical" evidence="2">
    <location>
        <begin position="134"/>
        <end position="154"/>
    </location>
</feature>
<feature type="topological domain" description="Cytoplasmic" evidence="2">
    <location>
        <begin position="155"/>
        <end position="162"/>
    </location>
</feature>
<feature type="transmembrane region" description="Helical" evidence="2">
    <location>
        <begin position="163"/>
        <end position="183"/>
    </location>
</feature>
<feature type="topological domain" description="Extracellular" evidence="2">
    <location>
        <begin position="184"/>
        <end position="211"/>
    </location>
</feature>
<feature type="region of interest" description="Disordered" evidence="3">
    <location>
        <begin position="1"/>
        <end position="48"/>
    </location>
</feature>
<feature type="short sequence motif" description="PPxY motif 1">
    <location>
        <begin position="29"/>
        <end position="32"/>
    </location>
</feature>
<feature type="short sequence motif" description="PPxY motif 2">
    <location>
        <begin position="54"/>
        <end position="57"/>
    </location>
</feature>
<feature type="compositionally biased region" description="Polar residues" evidence="3">
    <location>
        <begin position="1"/>
        <end position="13"/>
    </location>
</feature>
<keyword id="KW-0333">Golgi apparatus</keyword>
<keyword id="KW-0472">Membrane</keyword>
<keyword id="KW-1185">Reference proteome</keyword>
<keyword id="KW-0677">Repeat</keyword>
<keyword id="KW-0812">Transmembrane</keyword>
<keyword id="KW-1133">Transmembrane helix</keyword>